<name>Y2120_ERYLH</name>
<accession>Q2NCS5</accession>
<sequence>MSGRLDVLLVTGMSGAGKSTSLRVLEDLGWETLDNFPIRLLEPMIGEVLSSDNPAPLAVGFDSRTRGFVPNEIIELCKRLVQRDDLTLTTLFLDCTSEELERRFNETRRHHPMARGRTALEGIRAEREVMEPLRRWAEAVIDTSELAANELQQLIREQFHHDDPASQSVTVSSFGFARGMPPLADLVFDMRFLDNPHWVANLREQTGLDPAVGEYITARGDFDEIFQRMRDLILALLPRYRAQGKAYVHVAFGCTGGRHRSVFTAETMAQALREAGFSPTVVHRNLASRAADQFEGPQGRN</sequence>
<keyword id="KW-0067">ATP-binding</keyword>
<keyword id="KW-0342">GTP-binding</keyword>
<keyword id="KW-0547">Nucleotide-binding</keyword>
<keyword id="KW-1185">Reference proteome</keyword>
<comment type="function">
    <text evidence="1">Displays ATPase and GTPase activities.</text>
</comment>
<comment type="similarity">
    <text evidence="1">Belongs to the RapZ-like family.</text>
</comment>
<comment type="sequence caution" evidence="2">
    <conflict type="erroneous initiation">
        <sequence resource="EMBL-CDS" id="ABC62516"/>
    </conflict>
</comment>
<feature type="chain" id="PRO_0000383246" description="Nucleotide-binding protein ELI_02120">
    <location>
        <begin position="1"/>
        <end position="301"/>
    </location>
</feature>
<feature type="binding site" evidence="1">
    <location>
        <begin position="12"/>
        <end position="19"/>
    </location>
    <ligand>
        <name>ATP</name>
        <dbReference type="ChEBI" id="CHEBI:30616"/>
    </ligand>
</feature>
<feature type="binding site" evidence="1">
    <location>
        <begin position="62"/>
        <end position="65"/>
    </location>
    <ligand>
        <name>GTP</name>
        <dbReference type="ChEBI" id="CHEBI:37565"/>
    </ligand>
</feature>
<gene>
    <name type="ordered locus">ELI_02120</name>
</gene>
<protein>
    <recommendedName>
        <fullName evidence="1">Nucleotide-binding protein ELI_02120</fullName>
    </recommendedName>
</protein>
<organism>
    <name type="scientific">Erythrobacter litoralis (strain HTCC2594)</name>
    <dbReference type="NCBI Taxonomy" id="314225"/>
    <lineage>
        <taxon>Bacteria</taxon>
        <taxon>Pseudomonadati</taxon>
        <taxon>Pseudomonadota</taxon>
        <taxon>Alphaproteobacteria</taxon>
        <taxon>Sphingomonadales</taxon>
        <taxon>Erythrobacteraceae</taxon>
        <taxon>Erythrobacter/Porphyrobacter group</taxon>
        <taxon>Erythrobacter</taxon>
    </lineage>
</organism>
<dbReference type="EMBL" id="CP000157">
    <property type="protein sequence ID" value="ABC62516.1"/>
    <property type="status" value="ALT_INIT"/>
    <property type="molecule type" value="Genomic_DNA"/>
</dbReference>
<dbReference type="RefSeq" id="WP_011413392.1">
    <property type="nucleotide sequence ID" value="NC_007722.1"/>
</dbReference>
<dbReference type="SMR" id="Q2NCS5"/>
<dbReference type="STRING" id="314225.ELI_02120"/>
<dbReference type="KEGG" id="eli:ELI_02120"/>
<dbReference type="eggNOG" id="COG1660">
    <property type="taxonomic scope" value="Bacteria"/>
</dbReference>
<dbReference type="HOGENOM" id="CLU_059558_0_0_5"/>
<dbReference type="OrthoDB" id="9784461at2"/>
<dbReference type="Proteomes" id="UP000008808">
    <property type="component" value="Chromosome"/>
</dbReference>
<dbReference type="GO" id="GO:0005524">
    <property type="term" value="F:ATP binding"/>
    <property type="evidence" value="ECO:0007669"/>
    <property type="project" value="UniProtKB-UniRule"/>
</dbReference>
<dbReference type="GO" id="GO:0005525">
    <property type="term" value="F:GTP binding"/>
    <property type="evidence" value="ECO:0007669"/>
    <property type="project" value="UniProtKB-UniRule"/>
</dbReference>
<dbReference type="Gene3D" id="3.40.50.300">
    <property type="entry name" value="P-loop containing nucleotide triphosphate hydrolases"/>
    <property type="match status" value="1"/>
</dbReference>
<dbReference type="HAMAP" id="MF_00636">
    <property type="entry name" value="RapZ_like"/>
    <property type="match status" value="1"/>
</dbReference>
<dbReference type="InterPro" id="IPR027417">
    <property type="entry name" value="P-loop_NTPase"/>
</dbReference>
<dbReference type="InterPro" id="IPR005337">
    <property type="entry name" value="RapZ-like"/>
</dbReference>
<dbReference type="InterPro" id="IPR053930">
    <property type="entry name" value="RapZ-like_N"/>
</dbReference>
<dbReference type="InterPro" id="IPR053931">
    <property type="entry name" value="RapZ_C"/>
</dbReference>
<dbReference type="NCBIfam" id="NF003828">
    <property type="entry name" value="PRK05416.1"/>
    <property type="match status" value="1"/>
</dbReference>
<dbReference type="PANTHER" id="PTHR30448">
    <property type="entry name" value="RNASE ADAPTER PROTEIN RAPZ"/>
    <property type="match status" value="1"/>
</dbReference>
<dbReference type="PANTHER" id="PTHR30448:SF0">
    <property type="entry name" value="RNASE ADAPTER PROTEIN RAPZ"/>
    <property type="match status" value="1"/>
</dbReference>
<dbReference type="Pfam" id="PF22740">
    <property type="entry name" value="PapZ_C"/>
    <property type="match status" value="1"/>
</dbReference>
<dbReference type="Pfam" id="PF03668">
    <property type="entry name" value="RapZ-like_N"/>
    <property type="match status" value="1"/>
</dbReference>
<dbReference type="PIRSF" id="PIRSF005052">
    <property type="entry name" value="P-loopkin"/>
    <property type="match status" value="1"/>
</dbReference>
<dbReference type="SUPFAM" id="SSF52540">
    <property type="entry name" value="P-loop containing nucleoside triphosphate hydrolases"/>
    <property type="match status" value="1"/>
</dbReference>
<reference key="1">
    <citation type="journal article" date="2009" name="J. Bacteriol.">
        <title>Complete genome sequence of Erythrobacter litoralis HTCC2594.</title>
        <authorList>
            <person name="Oh H.M."/>
            <person name="Giovannoni S.J."/>
            <person name="Ferriera S."/>
            <person name="Johnson J."/>
            <person name="Cho J.C."/>
        </authorList>
    </citation>
    <scope>NUCLEOTIDE SEQUENCE [LARGE SCALE GENOMIC DNA]</scope>
    <source>
        <strain>HTCC2594</strain>
    </source>
</reference>
<evidence type="ECO:0000255" key="1">
    <source>
        <dbReference type="HAMAP-Rule" id="MF_00636"/>
    </source>
</evidence>
<evidence type="ECO:0000305" key="2"/>
<proteinExistence type="inferred from homology"/>